<reference key="1">
    <citation type="journal article" date="2007" name="Proc. Natl. Acad. Sci. U.S.A.">
        <title>Genomic and metabolic adaptations of Methanobrevibacter smithii to the human gut.</title>
        <authorList>
            <person name="Samuel B.S."/>
            <person name="Hansen E.E."/>
            <person name="Manchester J.K."/>
            <person name="Coutinho P.M."/>
            <person name="Henrissat B."/>
            <person name="Fulton R."/>
            <person name="Latreille P."/>
            <person name="Kim K."/>
            <person name="Wilson R.K."/>
            <person name="Gordon J.I."/>
        </authorList>
    </citation>
    <scope>NUCLEOTIDE SEQUENCE [LARGE SCALE GENOMIC DNA]</scope>
    <source>
        <strain>ATCC 35061 / DSM 861 / OCM 144 / PS</strain>
    </source>
</reference>
<sequence length="462" mass="51159">MNTNIKTREYTTISEVSGPLMVVEGVEGVGYNEIVDIETPNGEKRSGQVLEVTDDVAVIQVFEGTTDLNTKNTKARFTGQTAKIGVSRDMMGRMFNGIGKPIDGGPEIIPDEELDINGSPMNPASREFPEEFIQTGISTIDGMNTLVRGQKLPIFSGSGLPHNELAAQIARQAKVLGDDAEFAVIFAAMGITHEEANFFMRDFERTGALEKVTVFMNLADDPAIERILTPKMALTTAEYFAFTLGMQVLVILTDMTNYCEALREISAARDEVPGRRGYPGYMYTDLANIYERAGRIDGKEGSITQMPILVMPQDDITHPIPDLTGYITEGQIVLSRELNRKGIYPPVDVLPSLSRLMSGGIGGDKTRDDHSGVSDQLYSAYAGGRELRDLVAVVGEEALTERDQKFLEFAEEFEGKFITQSKDEDRSIIETLDLGWDLLKILPKSELKRVKEEFIEQYLPKE</sequence>
<comment type="function">
    <text evidence="1">Component of the A-type ATP synthase that produces ATP from ADP in the presence of a proton gradient across the membrane. The B chain is a regulatory subunit.</text>
</comment>
<comment type="subunit">
    <text evidence="1">Has multiple subunits with at least A(3), B(3), C, D, E, F, H, I and proteolipid K(x).</text>
</comment>
<comment type="subcellular location">
    <subcellularLocation>
        <location evidence="1">Cell membrane</location>
        <topology evidence="1">Peripheral membrane protein</topology>
    </subcellularLocation>
</comment>
<comment type="similarity">
    <text evidence="1">Belongs to the ATPase alpha/beta chains family.</text>
</comment>
<accession>A5UKB1</accession>
<protein>
    <recommendedName>
        <fullName evidence="1">A-type ATP synthase subunit B</fullName>
    </recommendedName>
</protein>
<dbReference type="EMBL" id="CP000678">
    <property type="protein sequence ID" value="ABQ86639.1"/>
    <property type="molecule type" value="Genomic_DNA"/>
</dbReference>
<dbReference type="RefSeq" id="WP_004032182.1">
    <property type="nucleotide sequence ID" value="NZ_CP117965.1"/>
</dbReference>
<dbReference type="SMR" id="A5UKB1"/>
<dbReference type="STRING" id="420247.Msm_0434"/>
<dbReference type="EnsemblBacteria" id="ABQ86639">
    <property type="protein sequence ID" value="ABQ86639"/>
    <property type="gene ID" value="Msm_0434"/>
</dbReference>
<dbReference type="KEGG" id="msi:Msm_0434"/>
<dbReference type="PATRIC" id="fig|420247.28.peg.434"/>
<dbReference type="eggNOG" id="arCOG00865">
    <property type="taxonomic scope" value="Archaea"/>
</dbReference>
<dbReference type="HOGENOM" id="CLU_022916_0_0_2"/>
<dbReference type="Proteomes" id="UP000001992">
    <property type="component" value="Chromosome"/>
</dbReference>
<dbReference type="GO" id="GO:0005886">
    <property type="term" value="C:plasma membrane"/>
    <property type="evidence" value="ECO:0007669"/>
    <property type="project" value="UniProtKB-SubCell"/>
</dbReference>
<dbReference type="GO" id="GO:0005524">
    <property type="term" value="F:ATP binding"/>
    <property type="evidence" value="ECO:0007669"/>
    <property type="project" value="UniProtKB-UniRule"/>
</dbReference>
<dbReference type="GO" id="GO:0046933">
    <property type="term" value="F:proton-transporting ATP synthase activity, rotational mechanism"/>
    <property type="evidence" value="ECO:0007669"/>
    <property type="project" value="UniProtKB-UniRule"/>
</dbReference>
<dbReference type="GO" id="GO:0042777">
    <property type="term" value="P:proton motive force-driven plasma membrane ATP synthesis"/>
    <property type="evidence" value="ECO:0007669"/>
    <property type="project" value="UniProtKB-UniRule"/>
</dbReference>
<dbReference type="CDD" id="cd18112">
    <property type="entry name" value="ATP-synt_V_A-type_beta_C"/>
    <property type="match status" value="1"/>
</dbReference>
<dbReference type="CDD" id="cd18118">
    <property type="entry name" value="ATP-synt_V_A-type_beta_N"/>
    <property type="match status" value="1"/>
</dbReference>
<dbReference type="CDD" id="cd01135">
    <property type="entry name" value="V_A-ATPase_B"/>
    <property type="match status" value="1"/>
</dbReference>
<dbReference type="Gene3D" id="3.40.50.12240">
    <property type="match status" value="1"/>
</dbReference>
<dbReference type="HAMAP" id="MF_00310">
    <property type="entry name" value="ATP_synth_B_arch"/>
    <property type="match status" value="1"/>
</dbReference>
<dbReference type="InterPro" id="IPR055190">
    <property type="entry name" value="ATP-synt_VA_C"/>
</dbReference>
<dbReference type="InterPro" id="IPR020003">
    <property type="entry name" value="ATPase_a/bsu_AS"/>
</dbReference>
<dbReference type="InterPro" id="IPR004100">
    <property type="entry name" value="ATPase_F1/V1/A1_a/bsu_N"/>
</dbReference>
<dbReference type="InterPro" id="IPR036121">
    <property type="entry name" value="ATPase_F1/V1/A1_a/bsu_N_sf"/>
</dbReference>
<dbReference type="InterPro" id="IPR000194">
    <property type="entry name" value="ATPase_F1/V1/A1_a/bsu_nucl-bd"/>
</dbReference>
<dbReference type="InterPro" id="IPR027417">
    <property type="entry name" value="P-loop_NTPase"/>
</dbReference>
<dbReference type="InterPro" id="IPR022879">
    <property type="entry name" value="V-ATPase_su_B/beta"/>
</dbReference>
<dbReference type="NCBIfam" id="NF003235">
    <property type="entry name" value="PRK04196.1"/>
    <property type="match status" value="1"/>
</dbReference>
<dbReference type="PANTHER" id="PTHR43389">
    <property type="entry name" value="V-TYPE PROTON ATPASE SUBUNIT B"/>
    <property type="match status" value="1"/>
</dbReference>
<dbReference type="PANTHER" id="PTHR43389:SF4">
    <property type="entry name" value="V-TYPE PROTON ATPASE SUBUNIT B"/>
    <property type="match status" value="1"/>
</dbReference>
<dbReference type="Pfam" id="PF00006">
    <property type="entry name" value="ATP-synt_ab"/>
    <property type="match status" value="1"/>
</dbReference>
<dbReference type="Pfam" id="PF02874">
    <property type="entry name" value="ATP-synt_ab_N"/>
    <property type="match status" value="1"/>
</dbReference>
<dbReference type="Pfam" id="PF22919">
    <property type="entry name" value="ATP-synt_VA_C"/>
    <property type="match status" value="1"/>
</dbReference>
<dbReference type="PIRSF" id="PIRSF039114">
    <property type="entry name" value="V-ATPsynth_beta/V-ATPase_B"/>
    <property type="match status" value="1"/>
</dbReference>
<dbReference type="SUPFAM" id="SSF47917">
    <property type="entry name" value="C-terminal domain of alpha and beta subunits of F1 ATP synthase"/>
    <property type="match status" value="1"/>
</dbReference>
<dbReference type="SUPFAM" id="SSF50615">
    <property type="entry name" value="N-terminal domain of alpha and beta subunits of F1 ATP synthase"/>
    <property type="match status" value="1"/>
</dbReference>
<dbReference type="SUPFAM" id="SSF52540">
    <property type="entry name" value="P-loop containing nucleoside triphosphate hydrolases"/>
    <property type="match status" value="1"/>
</dbReference>
<dbReference type="PROSITE" id="PS00152">
    <property type="entry name" value="ATPASE_ALPHA_BETA"/>
    <property type="match status" value="1"/>
</dbReference>
<evidence type="ECO:0000255" key="1">
    <source>
        <dbReference type="HAMAP-Rule" id="MF_00310"/>
    </source>
</evidence>
<feature type="chain" id="PRO_1000059382" description="A-type ATP synthase subunit B">
    <location>
        <begin position="1"/>
        <end position="462"/>
    </location>
</feature>
<keyword id="KW-0066">ATP synthesis</keyword>
<keyword id="KW-1003">Cell membrane</keyword>
<keyword id="KW-0375">Hydrogen ion transport</keyword>
<keyword id="KW-0406">Ion transport</keyword>
<keyword id="KW-0472">Membrane</keyword>
<keyword id="KW-0813">Transport</keyword>
<gene>
    <name evidence="1" type="primary">atpB</name>
    <name type="ordered locus">Msm_0434</name>
</gene>
<proteinExistence type="inferred from homology"/>
<name>AATB_METS3</name>
<organism>
    <name type="scientific">Methanobrevibacter smithii (strain ATCC 35061 / DSM 861 / OCM 144 / PS)</name>
    <dbReference type="NCBI Taxonomy" id="420247"/>
    <lineage>
        <taxon>Archaea</taxon>
        <taxon>Methanobacteriati</taxon>
        <taxon>Methanobacteriota</taxon>
        <taxon>Methanomada group</taxon>
        <taxon>Methanobacteria</taxon>
        <taxon>Methanobacteriales</taxon>
        <taxon>Methanobacteriaceae</taxon>
        <taxon>Methanobrevibacter</taxon>
    </lineage>
</organism>